<gene>
    <name evidence="1" type="primary">araA</name>
    <name type="ordered locus">ETA_17720</name>
</gene>
<accession>B2VER0</accession>
<feature type="chain" id="PRO_1000127606" description="L-arabinose isomerase">
    <location>
        <begin position="1"/>
        <end position="501"/>
    </location>
</feature>
<feature type="binding site" evidence="1">
    <location>
        <position position="306"/>
    </location>
    <ligand>
        <name>Mn(2+)</name>
        <dbReference type="ChEBI" id="CHEBI:29035"/>
    </ligand>
</feature>
<feature type="binding site" evidence="1">
    <location>
        <position position="333"/>
    </location>
    <ligand>
        <name>Mn(2+)</name>
        <dbReference type="ChEBI" id="CHEBI:29035"/>
    </ligand>
</feature>
<feature type="binding site" evidence="1">
    <location>
        <position position="350"/>
    </location>
    <ligand>
        <name>Mn(2+)</name>
        <dbReference type="ChEBI" id="CHEBI:29035"/>
    </ligand>
</feature>
<feature type="binding site" evidence="1">
    <location>
        <position position="450"/>
    </location>
    <ligand>
        <name>Mn(2+)</name>
        <dbReference type="ChEBI" id="CHEBI:29035"/>
    </ligand>
</feature>
<dbReference type="EC" id="5.3.1.4" evidence="1"/>
<dbReference type="EMBL" id="CU468135">
    <property type="protein sequence ID" value="CAO96818.1"/>
    <property type="molecule type" value="Genomic_DNA"/>
</dbReference>
<dbReference type="RefSeq" id="WP_012441507.1">
    <property type="nucleotide sequence ID" value="NC_010694.1"/>
</dbReference>
<dbReference type="SMR" id="B2VER0"/>
<dbReference type="STRING" id="465817.ETA_17720"/>
<dbReference type="KEGG" id="eta:ETA_17720"/>
<dbReference type="eggNOG" id="COG2160">
    <property type="taxonomic scope" value="Bacteria"/>
</dbReference>
<dbReference type="HOGENOM" id="CLU_045663_0_0_6"/>
<dbReference type="OrthoDB" id="9765600at2"/>
<dbReference type="UniPathway" id="UPA00145">
    <property type="reaction ID" value="UER00565"/>
</dbReference>
<dbReference type="Proteomes" id="UP000001726">
    <property type="component" value="Chromosome"/>
</dbReference>
<dbReference type="GO" id="GO:0005829">
    <property type="term" value="C:cytosol"/>
    <property type="evidence" value="ECO:0007669"/>
    <property type="project" value="TreeGrafter"/>
</dbReference>
<dbReference type="GO" id="GO:0008733">
    <property type="term" value="F:L-arabinose isomerase activity"/>
    <property type="evidence" value="ECO:0007669"/>
    <property type="project" value="UniProtKB-UniRule"/>
</dbReference>
<dbReference type="GO" id="GO:0030145">
    <property type="term" value="F:manganese ion binding"/>
    <property type="evidence" value="ECO:0007669"/>
    <property type="project" value="UniProtKB-UniRule"/>
</dbReference>
<dbReference type="GO" id="GO:0019569">
    <property type="term" value="P:L-arabinose catabolic process to xylulose 5-phosphate"/>
    <property type="evidence" value="ECO:0007669"/>
    <property type="project" value="UniProtKB-UniRule"/>
</dbReference>
<dbReference type="CDD" id="cd03557">
    <property type="entry name" value="L-arabinose_isomerase"/>
    <property type="match status" value="1"/>
</dbReference>
<dbReference type="Gene3D" id="3.40.50.10940">
    <property type="match status" value="1"/>
</dbReference>
<dbReference type="HAMAP" id="MF_00519">
    <property type="entry name" value="Arabinose_Isome"/>
    <property type="match status" value="1"/>
</dbReference>
<dbReference type="InterPro" id="IPR024664">
    <property type="entry name" value="Ara_Isoase_C"/>
</dbReference>
<dbReference type="InterPro" id="IPR055390">
    <property type="entry name" value="AraA_central"/>
</dbReference>
<dbReference type="InterPro" id="IPR055389">
    <property type="entry name" value="AraA_N"/>
</dbReference>
<dbReference type="InterPro" id="IPR038583">
    <property type="entry name" value="AraA_N_sf"/>
</dbReference>
<dbReference type="InterPro" id="IPR004216">
    <property type="entry name" value="Fuc/Ara_isomerase_C"/>
</dbReference>
<dbReference type="InterPro" id="IPR009015">
    <property type="entry name" value="Fucose_isomerase_N/cen_sf"/>
</dbReference>
<dbReference type="InterPro" id="IPR003762">
    <property type="entry name" value="Lara_isomerase"/>
</dbReference>
<dbReference type="NCBIfam" id="NF002795">
    <property type="entry name" value="PRK02929.1"/>
    <property type="match status" value="1"/>
</dbReference>
<dbReference type="PANTHER" id="PTHR38464">
    <property type="entry name" value="L-ARABINOSE ISOMERASE"/>
    <property type="match status" value="1"/>
</dbReference>
<dbReference type="PANTHER" id="PTHR38464:SF1">
    <property type="entry name" value="L-ARABINOSE ISOMERASE"/>
    <property type="match status" value="1"/>
</dbReference>
<dbReference type="Pfam" id="PF24856">
    <property type="entry name" value="AraA_central"/>
    <property type="match status" value="1"/>
</dbReference>
<dbReference type="Pfam" id="PF02610">
    <property type="entry name" value="AraA_N"/>
    <property type="match status" value="1"/>
</dbReference>
<dbReference type="Pfam" id="PF11762">
    <property type="entry name" value="Arabinose_Iso_C"/>
    <property type="match status" value="1"/>
</dbReference>
<dbReference type="PIRSF" id="PIRSF001478">
    <property type="entry name" value="L-ara_isomerase"/>
    <property type="match status" value="1"/>
</dbReference>
<dbReference type="SUPFAM" id="SSF50443">
    <property type="entry name" value="FucI/AraA C-terminal domain-like"/>
    <property type="match status" value="1"/>
</dbReference>
<dbReference type="SUPFAM" id="SSF53743">
    <property type="entry name" value="FucI/AraA N-terminal and middle domains"/>
    <property type="match status" value="1"/>
</dbReference>
<name>ARAA_ERWT9</name>
<comment type="function">
    <text evidence="1">Catalyzes the conversion of L-arabinose to L-ribulose.</text>
</comment>
<comment type="catalytic activity">
    <reaction evidence="1">
        <text>beta-L-arabinopyranose = L-ribulose</text>
        <dbReference type="Rhea" id="RHEA:14821"/>
        <dbReference type="ChEBI" id="CHEBI:16880"/>
        <dbReference type="ChEBI" id="CHEBI:40886"/>
        <dbReference type="EC" id="5.3.1.4"/>
    </reaction>
</comment>
<comment type="cofactor">
    <cofactor evidence="1">
        <name>Mn(2+)</name>
        <dbReference type="ChEBI" id="CHEBI:29035"/>
    </cofactor>
    <text evidence="1">Binds 1 Mn(2+) ion per subunit.</text>
</comment>
<comment type="pathway">
    <text evidence="1">Carbohydrate degradation; L-arabinose degradation via L-ribulose; D-xylulose 5-phosphate from L-arabinose (bacterial route): step 1/3.</text>
</comment>
<comment type="subunit">
    <text evidence="1">Homohexamer.</text>
</comment>
<comment type="similarity">
    <text evidence="1">Belongs to the arabinose isomerase family.</text>
</comment>
<reference key="1">
    <citation type="journal article" date="2008" name="Environ. Microbiol.">
        <title>The genome of Erwinia tasmaniensis strain Et1/99, a non-pathogenic bacterium in the genus Erwinia.</title>
        <authorList>
            <person name="Kube M."/>
            <person name="Migdoll A.M."/>
            <person name="Mueller I."/>
            <person name="Kuhl H."/>
            <person name="Beck A."/>
            <person name="Reinhardt R."/>
            <person name="Geider K."/>
        </authorList>
    </citation>
    <scope>NUCLEOTIDE SEQUENCE [LARGE SCALE GENOMIC DNA]</scope>
    <source>
        <strain>DSM 17950 / CFBP 7177 / CIP 109463 / NCPPB 4357 / Et1/99</strain>
    </source>
</reference>
<protein>
    <recommendedName>
        <fullName evidence="1">L-arabinose isomerase</fullName>
        <ecNumber evidence="1">5.3.1.4</ecNumber>
    </recommendedName>
</protein>
<evidence type="ECO:0000255" key="1">
    <source>
        <dbReference type="HAMAP-Rule" id="MF_00519"/>
    </source>
</evidence>
<proteinExistence type="inferred from homology"/>
<keyword id="KW-0054">Arabinose catabolism</keyword>
<keyword id="KW-0119">Carbohydrate metabolism</keyword>
<keyword id="KW-0413">Isomerase</keyword>
<keyword id="KW-0464">Manganese</keyword>
<keyword id="KW-0479">Metal-binding</keyword>
<keyword id="KW-1185">Reference proteome</keyword>
<sequence>MTQINNRSVWFVIGTQHLYGVETLRQVERHGQQVVDSLNRSGILPFRLQIRPLVKTPDEALALCREANYDSECYGIMTWLHTFSPAKMWIGGLSVLHKPLLQFHTQFNAEIPWDSMDMDFMNLNQTAHGGREFGFIGARMRLPHQVVTGHWQDERTLLRIGQWMRTAAALQAGRQLKVARFGDNMREVAVTEGDKVAAQIQFGYSVNGWGVGDLVEVINQVKDGDVNALVDEYESRYVFSAAAAVGGAKRQNVLDAARIELGIGRFLDDEGCRAFTTNFQTLHGMTQLPGLAVQRLMQQGYGFAGEGDWKTAALLHICKVMAGDLTGGTSFMEDYTYHFAPDNDLVLGSHMLEVCPSIASEARPLLDVQPLGIGGKADPARLIFAAKAGRAVNASVIDMGDRFRLLVNVLDAVEPPRALPKLPVARALWHAQPSLATASEAWILGGGAHHTVFSQALTVDDLRLYGEMLGIEVVVIDEQTTLHGLRDALRWNEAYYRLNQR</sequence>
<organism>
    <name type="scientific">Erwinia tasmaniensis (strain DSM 17950 / CFBP 7177 / CIP 109463 / NCPPB 4357 / Et1/99)</name>
    <dbReference type="NCBI Taxonomy" id="465817"/>
    <lineage>
        <taxon>Bacteria</taxon>
        <taxon>Pseudomonadati</taxon>
        <taxon>Pseudomonadota</taxon>
        <taxon>Gammaproteobacteria</taxon>
        <taxon>Enterobacterales</taxon>
        <taxon>Erwiniaceae</taxon>
        <taxon>Erwinia</taxon>
    </lineage>
</organism>